<keyword id="KW-0997">Cell inner membrane</keyword>
<keyword id="KW-1003">Cell membrane</keyword>
<keyword id="KW-0472">Membrane</keyword>
<keyword id="KW-0520">NAD</keyword>
<keyword id="KW-0874">Quinone</keyword>
<keyword id="KW-1278">Translocase</keyword>
<keyword id="KW-0812">Transmembrane</keyword>
<keyword id="KW-1133">Transmembrane helix</keyword>
<keyword id="KW-0813">Transport</keyword>
<keyword id="KW-0830">Ubiquinone</keyword>
<dbReference type="EC" id="7.1.1.-" evidence="1"/>
<dbReference type="EMBL" id="CP000802">
    <property type="protein sequence ID" value="ABV06711.1"/>
    <property type="molecule type" value="Genomic_DNA"/>
</dbReference>
<dbReference type="RefSeq" id="WP_000062997.1">
    <property type="nucleotide sequence ID" value="NC_009800.1"/>
</dbReference>
<dbReference type="SMR" id="A8A2F7"/>
<dbReference type="GeneID" id="93774886"/>
<dbReference type="KEGG" id="ecx:EcHS_A2437"/>
<dbReference type="HOGENOM" id="CLU_119549_2_0_6"/>
<dbReference type="GO" id="GO:0030964">
    <property type="term" value="C:NADH dehydrogenase complex"/>
    <property type="evidence" value="ECO:0007669"/>
    <property type="project" value="TreeGrafter"/>
</dbReference>
<dbReference type="GO" id="GO:0005886">
    <property type="term" value="C:plasma membrane"/>
    <property type="evidence" value="ECO:0007669"/>
    <property type="project" value="UniProtKB-SubCell"/>
</dbReference>
<dbReference type="GO" id="GO:0008137">
    <property type="term" value="F:NADH dehydrogenase (ubiquinone) activity"/>
    <property type="evidence" value="ECO:0007669"/>
    <property type="project" value="InterPro"/>
</dbReference>
<dbReference type="GO" id="GO:0050136">
    <property type="term" value="F:NADH:ubiquinone reductase (non-electrogenic) activity"/>
    <property type="evidence" value="ECO:0007669"/>
    <property type="project" value="UniProtKB-UniRule"/>
</dbReference>
<dbReference type="GO" id="GO:0048038">
    <property type="term" value="F:quinone binding"/>
    <property type="evidence" value="ECO:0007669"/>
    <property type="project" value="UniProtKB-KW"/>
</dbReference>
<dbReference type="FunFam" id="1.20.58.1610:FF:000003">
    <property type="entry name" value="NADH-quinone oxidoreductase subunit A"/>
    <property type="match status" value="1"/>
</dbReference>
<dbReference type="Gene3D" id="1.20.58.1610">
    <property type="entry name" value="NADH:ubiquinone/plastoquinone oxidoreductase, chain 3"/>
    <property type="match status" value="1"/>
</dbReference>
<dbReference type="HAMAP" id="MF_01394">
    <property type="entry name" value="NDH1_NuoA"/>
    <property type="match status" value="1"/>
</dbReference>
<dbReference type="InterPro" id="IPR023043">
    <property type="entry name" value="NAD(P)H_OxRDtase_bac/plastid"/>
</dbReference>
<dbReference type="InterPro" id="IPR000440">
    <property type="entry name" value="NADH_UbQ/plastoQ_OxRdtase_su3"/>
</dbReference>
<dbReference type="InterPro" id="IPR038430">
    <property type="entry name" value="NDAH_ubi_oxred_su3_sf"/>
</dbReference>
<dbReference type="PANTHER" id="PTHR11058:SF21">
    <property type="entry name" value="NADH-QUINONE OXIDOREDUCTASE SUBUNIT A"/>
    <property type="match status" value="1"/>
</dbReference>
<dbReference type="PANTHER" id="PTHR11058">
    <property type="entry name" value="NADH-UBIQUINONE OXIDOREDUCTASE CHAIN 3"/>
    <property type="match status" value="1"/>
</dbReference>
<dbReference type="Pfam" id="PF00507">
    <property type="entry name" value="Oxidored_q4"/>
    <property type="match status" value="1"/>
</dbReference>
<proteinExistence type="inferred from homology"/>
<feature type="chain" id="PRO_0000362685" description="NADH-quinone oxidoreductase subunit A">
    <location>
        <begin position="1"/>
        <end position="147"/>
    </location>
</feature>
<feature type="transmembrane region" description="Helical" evidence="1">
    <location>
        <begin position="16"/>
        <end position="36"/>
    </location>
</feature>
<feature type="transmembrane region" description="Helical" evidence="1">
    <location>
        <begin position="68"/>
        <end position="88"/>
    </location>
</feature>
<feature type="transmembrane region" description="Helical" evidence="1">
    <location>
        <begin position="98"/>
        <end position="118"/>
    </location>
</feature>
<protein>
    <recommendedName>
        <fullName evidence="1">NADH-quinone oxidoreductase subunit A</fullName>
        <ecNumber evidence="1">7.1.1.-</ecNumber>
    </recommendedName>
    <alternativeName>
        <fullName evidence="1">NADH dehydrogenase I subunit A</fullName>
    </alternativeName>
    <alternativeName>
        <fullName evidence="1">NDH-1 subunit A</fullName>
    </alternativeName>
    <alternativeName>
        <fullName evidence="1">NUO1</fullName>
    </alternativeName>
</protein>
<evidence type="ECO:0000255" key="1">
    <source>
        <dbReference type="HAMAP-Rule" id="MF_01394"/>
    </source>
</evidence>
<reference key="1">
    <citation type="journal article" date="2008" name="J. Bacteriol.">
        <title>The pangenome structure of Escherichia coli: comparative genomic analysis of E. coli commensal and pathogenic isolates.</title>
        <authorList>
            <person name="Rasko D.A."/>
            <person name="Rosovitz M.J."/>
            <person name="Myers G.S.A."/>
            <person name="Mongodin E.F."/>
            <person name="Fricke W.F."/>
            <person name="Gajer P."/>
            <person name="Crabtree J."/>
            <person name="Sebaihia M."/>
            <person name="Thomson N.R."/>
            <person name="Chaudhuri R."/>
            <person name="Henderson I.R."/>
            <person name="Sperandio V."/>
            <person name="Ravel J."/>
        </authorList>
    </citation>
    <scope>NUCLEOTIDE SEQUENCE [LARGE SCALE GENOMIC DNA]</scope>
    <source>
        <strain>HS</strain>
    </source>
</reference>
<accession>A8A2F7</accession>
<sequence>MSMSTSTEVIAHHWAFAIFLIVAIGLCCLMLVGGWFLGGRARARSKNVPFESGIDSVGSARLRLSAKFYLVAMFFVIFDVEALYLFAWSTSIRESGWVGFVEAAIFIFVLLAGLVYLVRIGALDWTPARSRRERMNPETNSIANRQR</sequence>
<gene>
    <name evidence="1" type="primary">nuoA</name>
    <name type="ordered locus">EcHS_A2437</name>
</gene>
<name>NUOA_ECOHS</name>
<comment type="function">
    <text evidence="1">NDH-1 shuttles electrons from NADH, via FMN and iron-sulfur (Fe-S) centers, to quinones in the respiratory chain. The immediate electron acceptor for the enzyme in this species is believed to be ubiquinone. Couples the redox reaction to proton translocation (for every two electrons transferred, four hydrogen ions are translocated across the cytoplasmic membrane), and thus conserves the redox energy in a proton gradient.</text>
</comment>
<comment type="catalytic activity">
    <reaction evidence="1">
        <text>a quinone + NADH + 5 H(+)(in) = a quinol + NAD(+) + 4 H(+)(out)</text>
        <dbReference type="Rhea" id="RHEA:57888"/>
        <dbReference type="ChEBI" id="CHEBI:15378"/>
        <dbReference type="ChEBI" id="CHEBI:24646"/>
        <dbReference type="ChEBI" id="CHEBI:57540"/>
        <dbReference type="ChEBI" id="CHEBI:57945"/>
        <dbReference type="ChEBI" id="CHEBI:132124"/>
    </reaction>
</comment>
<comment type="subunit">
    <text evidence="1">NDH-1 is composed of 13 different subunits. Subunits NuoA, H, J, K, L, M, N constitute the membrane sector of the complex.</text>
</comment>
<comment type="subcellular location">
    <subcellularLocation>
        <location evidence="1">Cell inner membrane</location>
        <topology evidence="1">Multi-pass membrane protein</topology>
    </subcellularLocation>
</comment>
<comment type="similarity">
    <text evidence="1">Belongs to the complex I subunit 3 family.</text>
</comment>
<organism>
    <name type="scientific">Escherichia coli O9:H4 (strain HS)</name>
    <dbReference type="NCBI Taxonomy" id="331112"/>
    <lineage>
        <taxon>Bacteria</taxon>
        <taxon>Pseudomonadati</taxon>
        <taxon>Pseudomonadota</taxon>
        <taxon>Gammaproteobacteria</taxon>
        <taxon>Enterobacterales</taxon>
        <taxon>Enterobacteriaceae</taxon>
        <taxon>Escherichia</taxon>
    </lineage>
</organism>